<name>COPA1_ORYSJ</name>
<organism>
    <name type="scientific">Oryza sativa subsp. japonica</name>
    <name type="common">Rice</name>
    <dbReference type="NCBI Taxonomy" id="39947"/>
    <lineage>
        <taxon>Eukaryota</taxon>
        <taxon>Viridiplantae</taxon>
        <taxon>Streptophyta</taxon>
        <taxon>Embryophyta</taxon>
        <taxon>Tracheophyta</taxon>
        <taxon>Spermatophyta</taxon>
        <taxon>Magnoliopsida</taxon>
        <taxon>Liliopsida</taxon>
        <taxon>Poales</taxon>
        <taxon>Poaceae</taxon>
        <taxon>BOP clade</taxon>
        <taxon>Oryzoideae</taxon>
        <taxon>Oryzeae</taxon>
        <taxon>Oryzinae</taxon>
        <taxon>Oryza</taxon>
        <taxon>Oryza sativa</taxon>
    </lineage>
</organism>
<protein>
    <recommendedName>
        <fullName>Coatomer subunit alpha-1</fullName>
    </recommendedName>
    <alternativeName>
        <fullName>Alpha-coat protein 1</fullName>
        <shortName>Alpha-COP 1</shortName>
    </alternativeName>
</protein>
<comment type="function">
    <text evidence="1">The coatomer is a cytosolic protein complex that binds to dilysine motifs and reversibly associates with Golgi non-clathrin-coated vesicles, which further mediate biosynthetic protein transport from the ER, via the Golgi up to the trans Golgi network. Coatomer complex is required for budding from Golgi membranes, and is essential for the retrograde Golgi-to-ER transport of dilysine-tagged proteins (By similarity).</text>
</comment>
<comment type="subunit">
    <text evidence="1">Oligomeric complex that consists of at least the alpha, beta, beta', gamma, delta, epsilon and zeta subunits.</text>
</comment>
<comment type="subcellular location">
    <subcellularLocation>
        <location evidence="1">Cytoplasm</location>
    </subcellularLocation>
    <subcellularLocation>
        <location evidence="1">Golgi apparatus membrane</location>
        <topology evidence="1">Peripheral membrane protein</topology>
        <orientation evidence="1">Cytoplasmic side</orientation>
    </subcellularLocation>
    <subcellularLocation>
        <location evidence="1">Cytoplasmic vesicle</location>
        <location evidence="1">COPI-coated vesicle membrane</location>
        <topology evidence="1">Peripheral membrane protein</topology>
        <orientation evidence="1">Cytoplasmic side</orientation>
    </subcellularLocation>
    <text evidence="1">The coatomer is cytoplasmic or polymerized on the cytoplasmic side of the Golgi, as well as on the vesicles/buds originating from it.</text>
</comment>
<gene>
    <name type="ordered locus">Os03g0711400</name>
    <name type="ordered locus">LOC_Os03g50340</name>
    <name type="ORF">OsJ_011822</name>
    <name type="ORF">OSJNBb0033N16.10</name>
</gene>
<evidence type="ECO:0000250" key="1"/>
<evidence type="ECO:0000256" key="2">
    <source>
        <dbReference type="SAM" id="MobiDB-lite"/>
    </source>
</evidence>
<proteinExistence type="evidence at transcript level"/>
<sequence>MLTKFETKSNRVKGLSFHPRRPWILASLHSGVIQMWDYRMGTLLDRFDEHDGPVRGVHFHATQPLFVSGGDDYKIKVWNYKTHRCLFTLHGHLDYIRTVQFHHEYPWIVSASDDQTIRIWNWQSRTCVAVLTGHNHYVMCASFHPKEDLVVSASLDQTVRVWDIGALRKKTVSPADDILRLTQMNTDLFGGVDAVVKYVLEGHDRGVNWASFHPTLPLIVSGADDRQVKLWRMNDTKAWEVDTLRGHMNNVSCVMFHAKQDIIVSNSEDKSIRIWDATKRTGIQTFRREHDRFWILSAHPEMNLLAAGHDSGMIVFKLERERPAFSVSGDTVFYVKDRFLRFFEFTTQKEVQLAPIRRPGSVSLNQSPKTLSYSPTENAVLICSDVDGGSYELYIVPKDSAGRADYLQDAKKGAGGSAVFVARNRFAVLEKSSNQVLVKNLKNEIVKKSPLPIATDAIYYAGTGNLLCKAEDRVTIFDLQQRLILGELQAPSVKYVVWSSDMESVALLSKHAVVIANKKLVHRCTLHETIRVKSGAWDENGVFIYTTLNHIKYCLPNGDSGIIKTLDVPIYITRVIGNNIFCLDRDGKNKLVTVDASEYIFKLALLRKRYDHVMSMIKNSQLCGQAVISYLQQKGFPEVALHFVKDEKTRFNLALESGNIQIAVASAKEIDDKDHWYRLGIEALRQGNVGIVEYAYQRTKNFERLAFLYLITGYMDKVGFMCKIAGQNNNLMGQFHNALYLGDALKRVEILENAGQLPLAYITATTHGLTEIADRLAAELGENIPSLPEGKARSLLIPPAPLTASGDWPLLRVMHGIFEGGLDATGKAELEEDDEAAGADWGDEDLDMVDASEAMANGGDGFDAEEGEANEEDGEEGGWDLEDLELPPEAETPKNAGNARSAVFVAPPPGMPVSLIWTQKSSLAGEHAAAGNFDTAMRLLSRQLGIKNFAPLKPLFVDLHMGSHSYLRALATAPIIPIAVEKGWSESASPNVRGPPALVFTFPQMEDRLKAAYKATTDGKFPEALRQFLSILHTIPLIVVDSRREVDEVKELIEIVREYVLGLRMELKRKELRDDVNRQQELAAYFTNCKLQRVHMRLVLGSAMGLCYKQKNFATAEHFARMLLENNPNEAQARRARQVQQQCSGKKDSSELNYDYRNPFVVCGATYVPIYRGQKDVSCPYCGSRFVPSIEGQLCTICELAVVGADASGLLCSPTQSR</sequence>
<reference key="1">
    <citation type="journal article" date="2005" name="Genome Res.">
        <title>Sequence, annotation, and analysis of synteny between rice chromosome 3 and diverged grass species.</title>
        <authorList>
            <consortium name="The rice chromosome 3 sequencing consortium"/>
            <person name="Buell C.R."/>
            <person name="Yuan Q."/>
            <person name="Ouyang S."/>
            <person name="Liu J."/>
            <person name="Zhu W."/>
            <person name="Wang A."/>
            <person name="Maiti R."/>
            <person name="Haas B."/>
            <person name="Wortman J."/>
            <person name="Pertea M."/>
            <person name="Jones K.M."/>
            <person name="Kim M."/>
            <person name="Overton L."/>
            <person name="Tsitrin T."/>
            <person name="Fadrosh D."/>
            <person name="Bera J."/>
            <person name="Weaver B."/>
            <person name="Jin S."/>
            <person name="Johri S."/>
            <person name="Reardon M."/>
            <person name="Webb K."/>
            <person name="Hill J."/>
            <person name="Moffat K."/>
            <person name="Tallon L."/>
            <person name="Van Aken S."/>
            <person name="Lewis M."/>
            <person name="Utterback T."/>
            <person name="Feldblyum T."/>
            <person name="Zismann V."/>
            <person name="Iobst S."/>
            <person name="Hsiao J."/>
            <person name="de Vazeille A.R."/>
            <person name="Salzberg S.L."/>
            <person name="White O."/>
            <person name="Fraser C.M."/>
            <person name="Yu Y."/>
            <person name="Kim H."/>
            <person name="Rambo T."/>
            <person name="Currie J."/>
            <person name="Collura K."/>
            <person name="Kernodle-Thompson S."/>
            <person name="Wei F."/>
            <person name="Kudrna K."/>
            <person name="Ammiraju J.S.S."/>
            <person name="Luo M."/>
            <person name="Goicoechea J.L."/>
            <person name="Wing R.A."/>
            <person name="Henry D."/>
            <person name="Oates R."/>
            <person name="Palmer M."/>
            <person name="Pries G."/>
            <person name="Saski C."/>
            <person name="Simmons J."/>
            <person name="Soderlund C."/>
            <person name="Nelson W."/>
            <person name="de la Bastide M."/>
            <person name="Spiegel L."/>
            <person name="Nascimento L."/>
            <person name="Huang E."/>
            <person name="Preston R."/>
            <person name="Zutavern T."/>
            <person name="Palmer L."/>
            <person name="O'Shaughnessy A."/>
            <person name="Dike S."/>
            <person name="McCombie W.R."/>
            <person name="Minx P."/>
            <person name="Cordum H."/>
            <person name="Wilson R."/>
            <person name="Jin W."/>
            <person name="Lee H.R."/>
            <person name="Jiang J."/>
            <person name="Jackson S."/>
        </authorList>
    </citation>
    <scope>NUCLEOTIDE SEQUENCE [LARGE SCALE GENOMIC DNA]</scope>
    <source>
        <strain>cv. Nipponbare</strain>
    </source>
</reference>
<reference key="2">
    <citation type="journal article" date="2005" name="Nature">
        <title>The map-based sequence of the rice genome.</title>
        <authorList>
            <consortium name="International rice genome sequencing project (IRGSP)"/>
        </authorList>
    </citation>
    <scope>NUCLEOTIDE SEQUENCE [LARGE SCALE GENOMIC DNA]</scope>
    <source>
        <strain>cv. Nipponbare</strain>
    </source>
</reference>
<reference key="3">
    <citation type="journal article" date="2008" name="Nucleic Acids Res.">
        <title>The rice annotation project database (RAP-DB): 2008 update.</title>
        <authorList>
            <consortium name="The rice annotation project (RAP)"/>
        </authorList>
    </citation>
    <scope>GENOME REANNOTATION</scope>
    <source>
        <strain>cv. Nipponbare</strain>
    </source>
</reference>
<reference key="4">
    <citation type="journal article" date="2013" name="Rice">
        <title>Improvement of the Oryza sativa Nipponbare reference genome using next generation sequence and optical map data.</title>
        <authorList>
            <person name="Kawahara Y."/>
            <person name="de la Bastide M."/>
            <person name="Hamilton J.P."/>
            <person name="Kanamori H."/>
            <person name="McCombie W.R."/>
            <person name="Ouyang S."/>
            <person name="Schwartz D.C."/>
            <person name="Tanaka T."/>
            <person name="Wu J."/>
            <person name="Zhou S."/>
            <person name="Childs K.L."/>
            <person name="Davidson R.M."/>
            <person name="Lin H."/>
            <person name="Quesada-Ocampo L."/>
            <person name="Vaillancourt B."/>
            <person name="Sakai H."/>
            <person name="Lee S.S."/>
            <person name="Kim J."/>
            <person name="Numa H."/>
            <person name="Itoh T."/>
            <person name="Buell C.R."/>
            <person name="Matsumoto T."/>
        </authorList>
    </citation>
    <scope>GENOME REANNOTATION</scope>
    <source>
        <strain>cv. Nipponbare</strain>
    </source>
</reference>
<reference key="5">
    <citation type="journal article" date="2005" name="PLoS Biol.">
        <title>The genomes of Oryza sativa: a history of duplications.</title>
        <authorList>
            <person name="Yu J."/>
            <person name="Wang J."/>
            <person name="Lin W."/>
            <person name="Li S."/>
            <person name="Li H."/>
            <person name="Zhou J."/>
            <person name="Ni P."/>
            <person name="Dong W."/>
            <person name="Hu S."/>
            <person name="Zeng C."/>
            <person name="Zhang J."/>
            <person name="Zhang Y."/>
            <person name="Li R."/>
            <person name="Xu Z."/>
            <person name="Li S."/>
            <person name="Li X."/>
            <person name="Zheng H."/>
            <person name="Cong L."/>
            <person name="Lin L."/>
            <person name="Yin J."/>
            <person name="Geng J."/>
            <person name="Li G."/>
            <person name="Shi J."/>
            <person name="Liu J."/>
            <person name="Lv H."/>
            <person name="Li J."/>
            <person name="Wang J."/>
            <person name="Deng Y."/>
            <person name="Ran L."/>
            <person name="Shi X."/>
            <person name="Wang X."/>
            <person name="Wu Q."/>
            <person name="Li C."/>
            <person name="Ren X."/>
            <person name="Wang J."/>
            <person name="Wang X."/>
            <person name="Li D."/>
            <person name="Liu D."/>
            <person name="Zhang X."/>
            <person name="Ji Z."/>
            <person name="Zhao W."/>
            <person name="Sun Y."/>
            <person name="Zhang Z."/>
            <person name="Bao J."/>
            <person name="Han Y."/>
            <person name="Dong L."/>
            <person name="Ji J."/>
            <person name="Chen P."/>
            <person name="Wu S."/>
            <person name="Liu J."/>
            <person name="Xiao Y."/>
            <person name="Bu D."/>
            <person name="Tan J."/>
            <person name="Yang L."/>
            <person name="Ye C."/>
            <person name="Zhang J."/>
            <person name="Xu J."/>
            <person name="Zhou Y."/>
            <person name="Yu Y."/>
            <person name="Zhang B."/>
            <person name="Zhuang S."/>
            <person name="Wei H."/>
            <person name="Liu B."/>
            <person name="Lei M."/>
            <person name="Yu H."/>
            <person name="Li Y."/>
            <person name="Xu H."/>
            <person name="Wei S."/>
            <person name="He X."/>
            <person name="Fang L."/>
            <person name="Zhang Z."/>
            <person name="Zhang Y."/>
            <person name="Huang X."/>
            <person name="Su Z."/>
            <person name="Tong W."/>
            <person name="Li J."/>
            <person name="Tong Z."/>
            <person name="Li S."/>
            <person name="Ye J."/>
            <person name="Wang L."/>
            <person name="Fang L."/>
            <person name="Lei T."/>
            <person name="Chen C.-S."/>
            <person name="Chen H.-C."/>
            <person name="Xu Z."/>
            <person name="Li H."/>
            <person name="Huang H."/>
            <person name="Zhang F."/>
            <person name="Xu H."/>
            <person name="Li N."/>
            <person name="Zhao C."/>
            <person name="Li S."/>
            <person name="Dong L."/>
            <person name="Huang Y."/>
            <person name="Li L."/>
            <person name="Xi Y."/>
            <person name="Qi Q."/>
            <person name="Li W."/>
            <person name="Zhang B."/>
            <person name="Hu W."/>
            <person name="Zhang Y."/>
            <person name="Tian X."/>
            <person name="Jiao Y."/>
            <person name="Liang X."/>
            <person name="Jin J."/>
            <person name="Gao L."/>
            <person name="Zheng W."/>
            <person name="Hao B."/>
            <person name="Liu S.-M."/>
            <person name="Wang W."/>
            <person name="Yuan L."/>
            <person name="Cao M."/>
            <person name="McDermott J."/>
            <person name="Samudrala R."/>
            <person name="Wang J."/>
            <person name="Wong G.K.-S."/>
            <person name="Yang H."/>
        </authorList>
    </citation>
    <scope>NUCLEOTIDE SEQUENCE [LARGE SCALE GENOMIC DNA]</scope>
    <source>
        <strain>cv. Nipponbare</strain>
    </source>
</reference>
<reference key="6">
    <citation type="journal article" date="2003" name="Science">
        <title>Collection, mapping, and annotation of over 28,000 cDNA clones from japonica rice.</title>
        <authorList>
            <consortium name="The rice full-length cDNA consortium"/>
        </authorList>
    </citation>
    <scope>NUCLEOTIDE SEQUENCE [LARGE SCALE MRNA]</scope>
    <source>
        <strain>cv. Nipponbare</strain>
    </source>
</reference>
<keyword id="KW-0963">Cytoplasm</keyword>
<keyword id="KW-0968">Cytoplasmic vesicle</keyword>
<keyword id="KW-0931">ER-Golgi transport</keyword>
<keyword id="KW-0333">Golgi apparatus</keyword>
<keyword id="KW-0472">Membrane</keyword>
<keyword id="KW-0653">Protein transport</keyword>
<keyword id="KW-1185">Reference proteome</keyword>
<keyword id="KW-0677">Repeat</keyword>
<keyword id="KW-0813">Transport</keyword>
<keyword id="KW-0853">WD repeat</keyword>
<dbReference type="EMBL" id="AC082645">
    <property type="protein sequence ID" value="AAK18834.1"/>
    <property type="molecule type" value="Genomic_DNA"/>
</dbReference>
<dbReference type="EMBL" id="DP000009">
    <property type="protein sequence ID" value="ABF98513.1"/>
    <property type="molecule type" value="Genomic_DNA"/>
</dbReference>
<dbReference type="EMBL" id="AP008209">
    <property type="protein sequence ID" value="BAF12970.1"/>
    <property type="molecule type" value="Genomic_DNA"/>
</dbReference>
<dbReference type="EMBL" id="AP014959">
    <property type="protein sequence ID" value="BAS86024.1"/>
    <property type="molecule type" value="Genomic_DNA"/>
</dbReference>
<dbReference type="EMBL" id="CM000140">
    <property type="protein sequence ID" value="EAZ28339.1"/>
    <property type="molecule type" value="Genomic_DNA"/>
</dbReference>
<dbReference type="EMBL" id="AK100286">
    <property type="protein sequence ID" value="BAG94532.1"/>
    <property type="molecule type" value="mRNA"/>
</dbReference>
<dbReference type="RefSeq" id="XP_015631030.1">
    <property type="nucleotide sequence ID" value="XM_015775544.1"/>
</dbReference>
<dbReference type="SMR" id="Q9AUR8"/>
<dbReference type="FunCoup" id="Q9AUR8">
    <property type="interactions" value="3497"/>
</dbReference>
<dbReference type="STRING" id="39947.Q9AUR8"/>
<dbReference type="PaxDb" id="39947-Q9AUR8"/>
<dbReference type="EnsemblPlants" id="Os03t0711400-01">
    <property type="protein sequence ID" value="Os03t0711400-01"/>
    <property type="gene ID" value="Os03g0711400"/>
</dbReference>
<dbReference type="Gramene" id="Os03t0711400-01">
    <property type="protein sequence ID" value="Os03t0711400-01"/>
    <property type="gene ID" value="Os03g0711400"/>
</dbReference>
<dbReference type="KEGG" id="dosa:Os03g0711400"/>
<dbReference type="eggNOG" id="KOG0292">
    <property type="taxonomic scope" value="Eukaryota"/>
</dbReference>
<dbReference type="HOGENOM" id="CLU_007565_1_0_1"/>
<dbReference type="InParanoid" id="Q9AUR8"/>
<dbReference type="OMA" id="FWICAVH"/>
<dbReference type="OrthoDB" id="10261470at2759"/>
<dbReference type="Proteomes" id="UP000000763">
    <property type="component" value="Chromosome 3"/>
</dbReference>
<dbReference type="Proteomes" id="UP000007752">
    <property type="component" value="Chromosome 3"/>
</dbReference>
<dbReference type="Proteomes" id="UP000059680">
    <property type="component" value="Chromosome 3"/>
</dbReference>
<dbReference type="ExpressionAtlas" id="Q9AUR8">
    <property type="expression patterns" value="baseline and differential"/>
</dbReference>
<dbReference type="GO" id="GO:0030126">
    <property type="term" value="C:COPI vesicle coat"/>
    <property type="evidence" value="ECO:0000318"/>
    <property type="project" value="GO_Central"/>
</dbReference>
<dbReference type="GO" id="GO:0000139">
    <property type="term" value="C:Golgi membrane"/>
    <property type="evidence" value="ECO:0007669"/>
    <property type="project" value="UniProtKB-SubCell"/>
</dbReference>
<dbReference type="GO" id="GO:0005198">
    <property type="term" value="F:structural molecule activity"/>
    <property type="evidence" value="ECO:0007669"/>
    <property type="project" value="InterPro"/>
</dbReference>
<dbReference type="GO" id="GO:0006888">
    <property type="term" value="P:endoplasmic reticulum to Golgi vesicle-mediated transport"/>
    <property type="evidence" value="ECO:0000318"/>
    <property type="project" value="GO_Central"/>
</dbReference>
<dbReference type="GO" id="GO:0006891">
    <property type="term" value="P:intra-Golgi vesicle-mediated transport"/>
    <property type="evidence" value="ECO:0000318"/>
    <property type="project" value="GO_Central"/>
</dbReference>
<dbReference type="GO" id="GO:0006886">
    <property type="term" value="P:intracellular protein transport"/>
    <property type="evidence" value="ECO:0000318"/>
    <property type="project" value="GO_Central"/>
</dbReference>
<dbReference type="GO" id="GO:0006890">
    <property type="term" value="P:retrograde vesicle-mediated transport, Golgi to endoplasmic reticulum"/>
    <property type="evidence" value="ECO:0000318"/>
    <property type="project" value="GO_Central"/>
</dbReference>
<dbReference type="CDD" id="cd22948">
    <property type="entry name" value="Coatomer_WDAD_alpha"/>
    <property type="match status" value="1"/>
</dbReference>
<dbReference type="CDD" id="cd00200">
    <property type="entry name" value="WD40"/>
    <property type="match status" value="1"/>
</dbReference>
<dbReference type="FunFam" id="1.25.40.470:FF:000002">
    <property type="entry name" value="Coatomer subunit alpha"/>
    <property type="match status" value="1"/>
</dbReference>
<dbReference type="FunFam" id="2.130.10.10:FF:000010">
    <property type="entry name" value="Coatomer subunit alpha"/>
    <property type="match status" value="1"/>
</dbReference>
<dbReference type="Gene3D" id="1.25.40.470">
    <property type="match status" value="1"/>
</dbReference>
<dbReference type="Gene3D" id="2.130.10.10">
    <property type="entry name" value="YVTN repeat-like/Quinoprotein amine dehydrogenase"/>
    <property type="match status" value="1"/>
</dbReference>
<dbReference type="InterPro" id="IPR006692">
    <property type="entry name" value="Beta-prop_COPA/B_2nd"/>
</dbReference>
<dbReference type="InterPro" id="IPR047312">
    <property type="entry name" value="Coatomer_alpha_WD-assoc_reg"/>
</dbReference>
<dbReference type="InterPro" id="IPR016391">
    <property type="entry name" value="Coatomer_asu"/>
</dbReference>
<dbReference type="InterPro" id="IPR010714">
    <property type="entry name" value="Coatomer_asu_C"/>
</dbReference>
<dbReference type="InterPro" id="IPR050844">
    <property type="entry name" value="Coatomer_complex_subunit"/>
</dbReference>
<dbReference type="InterPro" id="IPR020472">
    <property type="entry name" value="G-protein_beta_WD-40_rep"/>
</dbReference>
<dbReference type="InterPro" id="IPR056176">
    <property type="entry name" value="TPR_COPA_B"/>
</dbReference>
<dbReference type="InterPro" id="IPR015943">
    <property type="entry name" value="WD40/YVTN_repeat-like_dom_sf"/>
</dbReference>
<dbReference type="InterPro" id="IPR019775">
    <property type="entry name" value="WD40_repeat_CS"/>
</dbReference>
<dbReference type="InterPro" id="IPR036322">
    <property type="entry name" value="WD40_repeat_dom_sf"/>
</dbReference>
<dbReference type="InterPro" id="IPR001680">
    <property type="entry name" value="WD40_rpt"/>
</dbReference>
<dbReference type="PANTHER" id="PTHR19876">
    <property type="entry name" value="COATOMER"/>
    <property type="match status" value="1"/>
</dbReference>
<dbReference type="PANTHER" id="PTHR19876:SF1">
    <property type="entry name" value="COATOMER SUBUNIT ALPHA"/>
    <property type="match status" value="1"/>
</dbReference>
<dbReference type="Pfam" id="PF04053">
    <property type="entry name" value="B-prop_COPA_B_2nd"/>
    <property type="match status" value="1"/>
</dbReference>
<dbReference type="Pfam" id="PF06957">
    <property type="entry name" value="COPI_C"/>
    <property type="match status" value="1"/>
</dbReference>
<dbReference type="Pfam" id="PF23953">
    <property type="entry name" value="TPR_COPA_B"/>
    <property type="match status" value="1"/>
</dbReference>
<dbReference type="Pfam" id="PF00400">
    <property type="entry name" value="WD40"/>
    <property type="match status" value="5"/>
</dbReference>
<dbReference type="PIRSF" id="PIRSF003354">
    <property type="entry name" value="Coatomer_alpha_subunit"/>
    <property type="match status" value="1"/>
</dbReference>
<dbReference type="PRINTS" id="PR00320">
    <property type="entry name" value="GPROTEINBRPT"/>
</dbReference>
<dbReference type="SMART" id="SM00320">
    <property type="entry name" value="WD40"/>
    <property type="match status" value="7"/>
</dbReference>
<dbReference type="SUPFAM" id="SSF82171">
    <property type="entry name" value="DPP6 N-terminal domain-like"/>
    <property type="match status" value="1"/>
</dbReference>
<dbReference type="SUPFAM" id="SSF50978">
    <property type="entry name" value="WD40 repeat-like"/>
    <property type="match status" value="1"/>
</dbReference>
<dbReference type="PROSITE" id="PS00678">
    <property type="entry name" value="WD_REPEATS_1"/>
    <property type="match status" value="1"/>
</dbReference>
<dbReference type="PROSITE" id="PS50082">
    <property type="entry name" value="WD_REPEATS_2"/>
    <property type="match status" value="5"/>
</dbReference>
<dbReference type="PROSITE" id="PS50294">
    <property type="entry name" value="WD_REPEATS_REGION"/>
    <property type="match status" value="1"/>
</dbReference>
<feature type="chain" id="PRO_0000285601" description="Coatomer subunit alpha-1">
    <location>
        <begin position="1"/>
        <end position="1218"/>
    </location>
</feature>
<feature type="repeat" description="WD 1">
    <location>
        <begin position="7"/>
        <end position="48"/>
    </location>
</feature>
<feature type="repeat" description="WD 2">
    <location>
        <begin position="49"/>
        <end position="88"/>
    </location>
</feature>
<feature type="repeat" description="WD 3">
    <location>
        <begin position="91"/>
        <end position="132"/>
    </location>
</feature>
<feature type="repeat" description="WD 4">
    <location>
        <begin position="133"/>
        <end position="172"/>
    </location>
</feature>
<feature type="repeat" description="WD 5">
    <location>
        <begin position="202"/>
        <end position="241"/>
    </location>
</feature>
<feature type="repeat" description="WD 6">
    <location>
        <begin position="246"/>
        <end position="285"/>
    </location>
</feature>
<feature type="repeat" description="WD 7">
    <location>
        <begin position="288"/>
        <end position="326"/>
    </location>
</feature>
<feature type="repeat" description="WD 8">
    <location>
        <begin position="363"/>
        <end position="404"/>
    </location>
</feature>
<feature type="repeat" description="WD 9">
    <location>
        <begin position="450"/>
        <end position="489"/>
    </location>
</feature>
<feature type="region of interest" description="Disordered" evidence="2">
    <location>
        <begin position="857"/>
        <end position="882"/>
    </location>
</feature>
<feature type="compositionally biased region" description="Acidic residues" evidence="2">
    <location>
        <begin position="862"/>
        <end position="882"/>
    </location>
</feature>
<accession>Q9AUR8</accession>
<accession>B7EQ85</accession>
<accession>Q10E15</accession>